<feature type="chain" id="PRO_0000071958" description="Protein slowmo">
    <location>
        <begin position="1"/>
        <end position="215"/>
    </location>
</feature>
<feature type="domain" description="PRELI/MSF1" evidence="1">
    <location>
        <begin position="1"/>
        <end position="170"/>
    </location>
</feature>
<protein>
    <recommendedName>
        <fullName>Protein slowmo</fullName>
    </recommendedName>
</protein>
<proteinExistence type="evidence at transcript level"/>
<organism>
    <name type="scientific">Drosophila melanogaster</name>
    <name type="common">Fruit fly</name>
    <dbReference type="NCBI Taxonomy" id="7227"/>
    <lineage>
        <taxon>Eukaryota</taxon>
        <taxon>Metazoa</taxon>
        <taxon>Ecdysozoa</taxon>
        <taxon>Arthropoda</taxon>
        <taxon>Hexapoda</taxon>
        <taxon>Insecta</taxon>
        <taxon>Pterygota</taxon>
        <taxon>Neoptera</taxon>
        <taxon>Endopterygota</taxon>
        <taxon>Diptera</taxon>
        <taxon>Brachycera</taxon>
        <taxon>Muscomorpha</taxon>
        <taxon>Ephydroidea</taxon>
        <taxon>Drosophilidae</taxon>
        <taxon>Drosophila</taxon>
        <taxon>Sophophora</taxon>
    </lineage>
</organism>
<accession>Q9V3U9</accession>
<accession>Q058T1</accession>
<keyword id="KW-0217">Developmental protein</keyword>
<keyword id="KW-0221">Differentiation</keyword>
<keyword id="KW-0496">Mitochondrion</keyword>
<keyword id="KW-0896">Oogenesis</keyword>
<keyword id="KW-1185">Reference proteome</keyword>
<keyword id="KW-0744">Spermatogenesis</keyword>
<sequence length="215" mass="24305">MKIWTSEHIFNHPWETVTQAAWRKYPNPMTPSIIGTDVVERRVVDGVLHTHRLVQSKWYFPKWTHALIGTAKTCFASERSTVDPERKQMVLKTNNLTFCRNISVDEVLYYEPHPSDASKTLLKQEATVTVFGVPLSHYMEDLLTSTISTNAGKGRQGLEWVIGLINTEVKGIARGTDELLHNTRRSIDEVTESARKSMDEISAQAAKAAKAMHIT</sequence>
<reference key="1">
    <citation type="journal article" date="2004" name="Invertebr. Neurosci.">
        <title>Mutation in slowmo causes defects in Drosophila larval locomotor behaviour.</title>
        <authorList>
            <person name="Carhan A."/>
            <person name="Reeve S."/>
            <person name="Dee C.T."/>
            <person name="Baines R.A."/>
            <person name="Moffat K.G."/>
        </authorList>
    </citation>
    <scope>NUCLEOTIDE SEQUENCE [MRNA]</scope>
    <scope>FUNCTION</scope>
    <scope>SUBCELLULAR LOCATION</scope>
    <scope>TISSUE SPECIFICITY</scope>
    <scope>DISRUPTION PHENOTYPE</scope>
</reference>
<reference key="2">
    <citation type="journal article" date="2000" name="Science">
        <title>The genome sequence of Drosophila melanogaster.</title>
        <authorList>
            <person name="Adams M.D."/>
            <person name="Celniker S.E."/>
            <person name="Holt R.A."/>
            <person name="Evans C.A."/>
            <person name="Gocayne J.D."/>
            <person name="Amanatides P.G."/>
            <person name="Scherer S.E."/>
            <person name="Li P.W."/>
            <person name="Hoskins R.A."/>
            <person name="Galle R.F."/>
            <person name="George R.A."/>
            <person name="Lewis S.E."/>
            <person name="Richards S."/>
            <person name="Ashburner M."/>
            <person name="Henderson S.N."/>
            <person name="Sutton G.G."/>
            <person name="Wortman J.R."/>
            <person name="Yandell M.D."/>
            <person name="Zhang Q."/>
            <person name="Chen L.X."/>
            <person name="Brandon R.C."/>
            <person name="Rogers Y.-H.C."/>
            <person name="Blazej R.G."/>
            <person name="Champe M."/>
            <person name="Pfeiffer B.D."/>
            <person name="Wan K.H."/>
            <person name="Doyle C."/>
            <person name="Baxter E.G."/>
            <person name="Helt G."/>
            <person name="Nelson C.R."/>
            <person name="Miklos G.L.G."/>
            <person name="Abril J.F."/>
            <person name="Agbayani A."/>
            <person name="An H.-J."/>
            <person name="Andrews-Pfannkoch C."/>
            <person name="Baldwin D."/>
            <person name="Ballew R.M."/>
            <person name="Basu A."/>
            <person name="Baxendale J."/>
            <person name="Bayraktaroglu L."/>
            <person name="Beasley E.M."/>
            <person name="Beeson K.Y."/>
            <person name="Benos P.V."/>
            <person name="Berman B.P."/>
            <person name="Bhandari D."/>
            <person name="Bolshakov S."/>
            <person name="Borkova D."/>
            <person name="Botchan M.R."/>
            <person name="Bouck J."/>
            <person name="Brokstein P."/>
            <person name="Brottier P."/>
            <person name="Burtis K.C."/>
            <person name="Busam D.A."/>
            <person name="Butler H."/>
            <person name="Cadieu E."/>
            <person name="Center A."/>
            <person name="Chandra I."/>
            <person name="Cherry J.M."/>
            <person name="Cawley S."/>
            <person name="Dahlke C."/>
            <person name="Davenport L.B."/>
            <person name="Davies P."/>
            <person name="de Pablos B."/>
            <person name="Delcher A."/>
            <person name="Deng Z."/>
            <person name="Mays A.D."/>
            <person name="Dew I."/>
            <person name="Dietz S.M."/>
            <person name="Dodson K."/>
            <person name="Doup L.E."/>
            <person name="Downes M."/>
            <person name="Dugan-Rocha S."/>
            <person name="Dunkov B.C."/>
            <person name="Dunn P."/>
            <person name="Durbin K.J."/>
            <person name="Evangelista C.C."/>
            <person name="Ferraz C."/>
            <person name="Ferriera S."/>
            <person name="Fleischmann W."/>
            <person name="Fosler C."/>
            <person name="Gabrielian A.E."/>
            <person name="Garg N.S."/>
            <person name="Gelbart W.M."/>
            <person name="Glasser K."/>
            <person name="Glodek A."/>
            <person name="Gong F."/>
            <person name="Gorrell J.H."/>
            <person name="Gu Z."/>
            <person name="Guan P."/>
            <person name="Harris M."/>
            <person name="Harris N.L."/>
            <person name="Harvey D.A."/>
            <person name="Heiman T.J."/>
            <person name="Hernandez J.R."/>
            <person name="Houck J."/>
            <person name="Hostin D."/>
            <person name="Houston K.A."/>
            <person name="Howland T.J."/>
            <person name="Wei M.-H."/>
            <person name="Ibegwam C."/>
            <person name="Jalali M."/>
            <person name="Kalush F."/>
            <person name="Karpen G.H."/>
            <person name="Ke Z."/>
            <person name="Kennison J.A."/>
            <person name="Ketchum K.A."/>
            <person name="Kimmel B.E."/>
            <person name="Kodira C.D."/>
            <person name="Kraft C.L."/>
            <person name="Kravitz S."/>
            <person name="Kulp D."/>
            <person name="Lai Z."/>
            <person name="Lasko P."/>
            <person name="Lei Y."/>
            <person name="Levitsky A.A."/>
            <person name="Li J.H."/>
            <person name="Li Z."/>
            <person name="Liang Y."/>
            <person name="Lin X."/>
            <person name="Liu X."/>
            <person name="Mattei B."/>
            <person name="McIntosh T.C."/>
            <person name="McLeod M.P."/>
            <person name="McPherson D."/>
            <person name="Merkulov G."/>
            <person name="Milshina N.V."/>
            <person name="Mobarry C."/>
            <person name="Morris J."/>
            <person name="Moshrefi A."/>
            <person name="Mount S.M."/>
            <person name="Moy M."/>
            <person name="Murphy B."/>
            <person name="Murphy L."/>
            <person name="Muzny D.M."/>
            <person name="Nelson D.L."/>
            <person name="Nelson D.R."/>
            <person name="Nelson K.A."/>
            <person name="Nixon K."/>
            <person name="Nusskern D.R."/>
            <person name="Pacleb J.M."/>
            <person name="Palazzolo M."/>
            <person name="Pittman G.S."/>
            <person name="Pan S."/>
            <person name="Pollard J."/>
            <person name="Puri V."/>
            <person name="Reese M.G."/>
            <person name="Reinert K."/>
            <person name="Remington K."/>
            <person name="Saunders R.D.C."/>
            <person name="Scheeler F."/>
            <person name="Shen H."/>
            <person name="Shue B.C."/>
            <person name="Siden-Kiamos I."/>
            <person name="Simpson M."/>
            <person name="Skupski M.P."/>
            <person name="Smith T.J."/>
            <person name="Spier E."/>
            <person name="Spradling A.C."/>
            <person name="Stapleton M."/>
            <person name="Strong R."/>
            <person name="Sun E."/>
            <person name="Svirskas R."/>
            <person name="Tector C."/>
            <person name="Turner R."/>
            <person name="Venter E."/>
            <person name="Wang A.H."/>
            <person name="Wang X."/>
            <person name="Wang Z.-Y."/>
            <person name="Wassarman D.A."/>
            <person name="Weinstock G.M."/>
            <person name="Weissenbach J."/>
            <person name="Williams S.M."/>
            <person name="Woodage T."/>
            <person name="Worley K.C."/>
            <person name="Wu D."/>
            <person name="Yang S."/>
            <person name="Yao Q.A."/>
            <person name="Ye J."/>
            <person name="Yeh R.-F."/>
            <person name="Zaveri J.S."/>
            <person name="Zhan M."/>
            <person name="Zhang G."/>
            <person name="Zhao Q."/>
            <person name="Zheng L."/>
            <person name="Zheng X.H."/>
            <person name="Zhong F.N."/>
            <person name="Zhong W."/>
            <person name="Zhou X."/>
            <person name="Zhu S.C."/>
            <person name="Zhu X."/>
            <person name="Smith H.O."/>
            <person name="Gibbs R.A."/>
            <person name="Myers E.W."/>
            <person name="Rubin G.M."/>
            <person name="Venter J.C."/>
        </authorList>
    </citation>
    <scope>NUCLEOTIDE SEQUENCE [LARGE SCALE GENOMIC DNA]</scope>
    <source>
        <strain>Berkeley</strain>
    </source>
</reference>
<reference key="3">
    <citation type="journal article" date="2002" name="Genome Biol.">
        <title>Annotation of the Drosophila melanogaster euchromatic genome: a systematic review.</title>
        <authorList>
            <person name="Misra S."/>
            <person name="Crosby M.A."/>
            <person name="Mungall C.J."/>
            <person name="Matthews B.B."/>
            <person name="Campbell K.S."/>
            <person name="Hradecky P."/>
            <person name="Huang Y."/>
            <person name="Kaminker J.S."/>
            <person name="Millburn G.H."/>
            <person name="Prochnik S.E."/>
            <person name="Smith C.D."/>
            <person name="Tupy J.L."/>
            <person name="Whitfield E.J."/>
            <person name="Bayraktaroglu L."/>
            <person name="Berman B.P."/>
            <person name="Bettencourt B.R."/>
            <person name="Celniker S.E."/>
            <person name="de Grey A.D.N.J."/>
            <person name="Drysdale R.A."/>
            <person name="Harris N.L."/>
            <person name="Richter J."/>
            <person name="Russo S."/>
            <person name="Schroeder A.J."/>
            <person name="Shu S.Q."/>
            <person name="Stapleton M."/>
            <person name="Yamada C."/>
            <person name="Ashburner M."/>
            <person name="Gelbart W.M."/>
            <person name="Rubin G.M."/>
            <person name="Lewis S.E."/>
        </authorList>
    </citation>
    <scope>GENOME REANNOTATION</scope>
    <source>
        <strain>Berkeley</strain>
    </source>
</reference>
<reference key="4">
    <citation type="journal article" date="2002" name="Genome Biol.">
        <title>A Drosophila full-length cDNA resource.</title>
        <authorList>
            <person name="Stapleton M."/>
            <person name="Carlson J.W."/>
            <person name="Brokstein P."/>
            <person name="Yu C."/>
            <person name="Champe M."/>
            <person name="George R.A."/>
            <person name="Guarin H."/>
            <person name="Kronmiller B."/>
            <person name="Pacleb J.M."/>
            <person name="Park S."/>
            <person name="Wan K.H."/>
            <person name="Rubin G.M."/>
            <person name="Celniker S.E."/>
        </authorList>
    </citation>
    <scope>NUCLEOTIDE SEQUENCE [LARGE SCALE MRNA]</scope>
    <source>
        <strain>Berkeley</strain>
        <tissue>Head</tissue>
    </source>
</reference>
<reference key="5">
    <citation type="submission" date="2006-10" db="EMBL/GenBank/DDBJ databases">
        <authorList>
            <person name="Stapleton M."/>
            <person name="Carlson J.W."/>
            <person name="Frise E."/>
            <person name="Kapadia B."/>
            <person name="Park S."/>
            <person name="Wan K.H."/>
            <person name="Yu C."/>
            <person name="Celniker S.E."/>
        </authorList>
    </citation>
    <scope>NUCLEOTIDE SEQUENCE [LARGE SCALE MRNA]</scope>
    <source>
        <strain>Berkeley</strain>
        <tissue>Embryo</tissue>
    </source>
</reference>
<reference key="6">
    <citation type="journal article" date="2007" name="Genesis">
        <title>Slowmo is required for Drosophila germline proliferation.</title>
        <authorList>
            <person name="Reeve S."/>
            <person name="Carhan A."/>
            <person name="Dee C.T."/>
            <person name="Moffat K.G."/>
        </authorList>
    </citation>
    <scope>FUNCTION</scope>
    <scope>TISSUE SPECIFICITY</scope>
</reference>
<evidence type="ECO:0000255" key="1">
    <source>
        <dbReference type="PROSITE-ProRule" id="PRU00158"/>
    </source>
</evidence>
<evidence type="ECO:0000269" key="2">
    <source>
    </source>
</evidence>
<evidence type="ECO:0000269" key="3">
    <source>
    </source>
</evidence>
<evidence type="ECO:0000305" key="4"/>
<name>SLMO_DROME</name>
<gene>
    <name type="primary">slmo</name>
    <name type="synonym">kisir</name>
    <name type="ORF">CG9131</name>
</gene>
<dbReference type="EMBL" id="AF218125">
    <property type="protein sequence ID" value="AAF23180.1"/>
    <property type="molecule type" value="mRNA"/>
</dbReference>
<dbReference type="EMBL" id="AE014134">
    <property type="protein sequence ID" value="AAF52330.1"/>
    <property type="molecule type" value="Genomic_DNA"/>
</dbReference>
<dbReference type="EMBL" id="AY051484">
    <property type="protein sequence ID" value="AAK92908.1"/>
    <property type="molecule type" value="mRNA"/>
</dbReference>
<dbReference type="EMBL" id="BT029137">
    <property type="protein sequence ID" value="ABJ17070.1"/>
    <property type="molecule type" value="mRNA"/>
</dbReference>
<dbReference type="RefSeq" id="NP_001097094.1">
    <property type="nucleotide sequence ID" value="NM_001103624.2"/>
</dbReference>
<dbReference type="RefSeq" id="NP_001137793.1">
    <property type="nucleotide sequence ID" value="NM_001144321.2"/>
</dbReference>
<dbReference type="RefSeq" id="NP_001285653.1">
    <property type="nucleotide sequence ID" value="NM_001298724.1"/>
</dbReference>
<dbReference type="RefSeq" id="NP_524705.1">
    <property type="nucleotide sequence ID" value="NM_079966.3"/>
</dbReference>
<dbReference type="RefSeq" id="NP_723148.1">
    <property type="nucleotide sequence ID" value="NM_164677.2"/>
</dbReference>
<dbReference type="SMR" id="Q9V3U9"/>
<dbReference type="BioGRID" id="68852">
    <property type="interactions" value="1"/>
</dbReference>
<dbReference type="FunCoup" id="Q9V3U9">
    <property type="interactions" value="1965"/>
</dbReference>
<dbReference type="IntAct" id="Q9V3U9">
    <property type="interactions" value="2"/>
</dbReference>
<dbReference type="STRING" id="7227.FBpp0289088"/>
<dbReference type="PaxDb" id="7227-FBpp0111858"/>
<dbReference type="DNASU" id="44132"/>
<dbReference type="EnsemblMetazoa" id="FBtr0079217">
    <property type="protein sequence ID" value="FBpp0078848"/>
    <property type="gene ID" value="FBgn0029161"/>
</dbReference>
<dbReference type="EnsemblMetazoa" id="FBtr0079218">
    <property type="protein sequence ID" value="FBpp0078849"/>
    <property type="gene ID" value="FBgn0029161"/>
</dbReference>
<dbReference type="EnsemblMetazoa" id="FBtr0112945">
    <property type="protein sequence ID" value="FBpp0111858"/>
    <property type="gene ID" value="FBgn0029161"/>
</dbReference>
<dbReference type="EnsemblMetazoa" id="FBtr0299810">
    <property type="protein sequence ID" value="FBpp0289088"/>
    <property type="gene ID" value="FBgn0029161"/>
</dbReference>
<dbReference type="EnsemblMetazoa" id="FBtr0343130">
    <property type="protein sequence ID" value="FBpp0309829"/>
    <property type="gene ID" value="FBgn0029161"/>
</dbReference>
<dbReference type="GeneID" id="44132"/>
<dbReference type="KEGG" id="dme:Dmel_CG9131"/>
<dbReference type="UCSC" id="CG9131-RA">
    <property type="organism name" value="d. melanogaster"/>
</dbReference>
<dbReference type="AGR" id="FB:FBgn0029161"/>
<dbReference type="CTD" id="44132"/>
<dbReference type="FlyBase" id="FBgn0029161">
    <property type="gene designation" value="slmo"/>
</dbReference>
<dbReference type="VEuPathDB" id="VectorBase:FBgn0029161"/>
<dbReference type="eggNOG" id="KOG3336">
    <property type="taxonomic scope" value="Eukaryota"/>
</dbReference>
<dbReference type="GeneTree" id="ENSGT00950000182810"/>
<dbReference type="HOGENOM" id="CLU_067902_1_0_1"/>
<dbReference type="InParanoid" id="Q9V3U9"/>
<dbReference type="OMA" id="YCPWNEK"/>
<dbReference type="OrthoDB" id="407630at2759"/>
<dbReference type="PhylomeDB" id="Q9V3U9"/>
<dbReference type="Reactome" id="R-DME-6803204">
    <property type="pathway name" value="TP53 Regulates Transcription of Genes Involved in Cytochrome C Release"/>
</dbReference>
<dbReference type="SignaLink" id="Q9V3U9"/>
<dbReference type="BioGRID-ORCS" id="44132">
    <property type="hits" value="2 hits in 3 CRISPR screens"/>
</dbReference>
<dbReference type="GenomeRNAi" id="44132"/>
<dbReference type="PRO" id="PR:Q9V3U9"/>
<dbReference type="Proteomes" id="UP000000803">
    <property type="component" value="Chromosome 2L"/>
</dbReference>
<dbReference type="Bgee" id="FBgn0029161">
    <property type="expression patterns" value="Expressed in seminal fluid secreting gland and 155 other cell types or tissues"/>
</dbReference>
<dbReference type="ExpressionAtlas" id="Q9V3U9">
    <property type="expression patterns" value="baseline"/>
</dbReference>
<dbReference type="GO" id="GO:0005758">
    <property type="term" value="C:mitochondrial intermembrane space"/>
    <property type="evidence" value="ECO:0000318"/>
    <property type="project" value="GO_Central"/>
</dbReference>
<dbReference type="GO" id="GO:0005739">
    <property type="term" value="C:mitochondrion"/>
    <property type="evidence" value="ECO:0000315"/>
    <property type="project" value="UniProtKB"/>
</dbReference>
<dbReference type="GO" id="GO:1990050">
    <property type="term" value="F:phosphatidic acid transfer activity"/>
    <property type="evidence" value="ECO:0000318"/>
    <property type="project" value="GO_Central"/>
</dbReference>
<dbReference type="GO" id="GO:0030706">
    <property type="term" value="P:germarium-derived oocyte differentiation"/>
    <property type="evidence" value="ECO:0000315"/>
    <property type="project" value="FlyBase"/>
</dbReference>
<dbReference type="GO" id="GO:0008345">
    <property type="term" value="P:larval locomotory behavior"/>
    <property type="evidence" value="ECO:0000315"/>
    <property type="project" value="UniProtKB"/>
</dbReference>
<dbReference type="GO" id="GO:0030432">
    <property type="term" value="P:peristalsis"/>
    <property type="evidence" value="ECO:0000315"/>
    <property type="project" value="UniProtKB"/>
</dbReference>
<dbReference type="GO" id="GO:0015914">
    <property type="term" value="P:phospholipid transport"/>
    <property type="evidence" value="ECO:0000318"/>
    <property type="project" value="GO_Central"/>
</dbReference>
<dbReference type="GO" id="GO:0007283">
    <property type="term" value="P:spermatogenesis"/>
    <property type="evidence" value="ECO:0000315"/>
    <property type="project" value="FlyBase"/>
</dbReference>
<dbReference type="InterPro" id="IPR006797">
    <property type="entry name" value="PRELI/MSF1_dom"/>
</dbReference>
<dbReference type="InterPro" id="IPR037365">
    <property type="entry name" value="Slowmo/Ups"/>
</dbReference>
<dbReference type="PANTHER" id="PTHR11158">
    <property type="entry name" value="MSF1/PX19 RELATED"/>
    <property type="match status" value="1"/>
</dbReference>
<dbReference type="Pfam" id="PF04707">
    <property type="entry name" value="PRELI"/>
    <property type="match status" value="1"/>
</dbReference>
<dbReference type="PROSITE" id="PS50904">
    <property type="entry name" value="PRELI_MSF1"/>
    <property type="match status" value="1"/>
</dbReference>
<comment type="function">
    <text evidence="2 3">Required to regulate peristaltic movement and also for germline proliferation in males and females.</text>
</comment>
<comment type="subcellular location">
    <subcellularLocation>
        <location evidence="2">Mitochondrion</location>
    </subcellularLocation>
</comment>
<comment type="tissue specificity">
    <text evidence="2 3">Expressed in specific tissues such as the developing central nervous system (CNS) and both the male and female germline. In the CNS, it is restricted in a subset of cells during embryogenesis and early larval development. In embryos, it is also expressed in salivary glands. In the testis, expressed in somatic cyst cells throughout the distal region where the mitotic cysts develop, extending through to meiotic cysts.</text>
</comment>
<comment type="developmental stage">
    <text>Expressed from stage 16 embryos.</text>
</comment>
<comment type="disruption phenotype">
    <text evidence="2">Flies have defects in locomotor behavior and die during larval development, due to abnormal neural function. Mutant males lacking functional slmo survive into adulthood and show an early division of the germline but never progress through the gonial divisions. Mutant females demonstrate germarial degeneration and reduced fertility.</text>
</comment>
<comment type="similarity">
    <text evidence="4">Belongs to the slowmo family.</text>
</comment>